<proteinExistence type="inferred from homology"/>
<evidence type="ECO:0000255" key="1">
    <source>
        <dbReference type="HAMAP-Rule" id="MF_00332"/>
    </source>
</evidence>
<evidence type="ECO:0000256" key="2">
    <source>
        <dbReference type="SAM" id="MobiDB-lite"/>
    </source>
</evidence>
<accession>B3DZP7</accession>
<name>DNAK_METI4</name>
<dbReference type="EMBL" id="CP000975">
    <property type="protein sequence ID" value="ACD84232.1"/>
    <property type="molecule type" value="Genomic_DNA"/>
</dbReference>
<dbReference type="RefSeq" id="WP_012464514.1">
    <property type="nucleotide sequence ID" value="NC_010794.1"/>
</dbReference>
<dbReference type="SMR" id="B3DZP7"/>
<dbReference type="STRING" id="481448.Minf_2178"/>
<dbReference type="KEGG" id="min:Minf_2178"/>
<dbReference type="eggNOG" id="COG0443">
    <property type="taxonomic scope" value="Bacteria"/>
</dbReference>
<dbReference type="HOGENOM" id="CLU_005965_2_4_0"/>
<dbReference type="OrthoDB" id="9766019at2"/>
<dbReference type="Proteomes" id="UP000009149">
    <property type="component" value="Chromosome"/>
</dbReference>
<dbReference type="GO" id="GO:0005524">
    <property type="term" value="F:ATP binding"/>
    <property type="evidence" value="ECO:0007669"/>
    <property type="project" value="UniProtKB-UniRule"/>
</dbReference>
<dbReference type="GO" id="GO:0140662">
    <property type="term" value="F:ATP-dependent protein folding chaperone"/>
    <property type="evidence" value="ECO:0007669"/>
    <property type="project" value="InterPro"/>
</dbReference>
<dbReference type="GO" id="GO:0051082">
    <property type="term" value="F:unfolded protein binding"/>
    <property type="evidence" value="ECO:0007669"/>
    <property type="project" value="InterPro"/>
</dbReference>
<dbReference type="CDD" id="cd10234">
    <property type="entry name" value="ASKHA_NBD_HSP70_DnaK-like"/>
    <property type="match status" value="1"/>
</dbReference>
<dbReference type="FunFam" id="2.60.34.10:FF:000014">
    <property type="entry name" value="Chaperone protein DnaK HSP70"/>
    <property type="match status" value="1"/>
</dbReference>
<dbReference type="FunFam" id="3.30.420.40:FF:000020">
    <property type="entry name" value="Chaperone protein HscA homolog"/>
    <property type="match status" value="1"/>
</dbReference>
<dbReference type="FunFam" id="3.30.30.30:FF:000002">
    <property type="entry name" value="Heat shock 70 kDa protein 4"/>
    <property type="match status" value="1"/>
</dbReference>
<dbReference type="FunFam" id="1.20.1270.10:FF:000001">
    <property type="entry name" value="Molecular chaperone DnaK"/>
    <property type="match status" value="1"/>
</dbReference>
<dbReference type="FunFam" id="3.30.420.40:FF:000004">
    <property type="entry name" value="Molecular chaperone DnaK"/>
    <property type="match status" value="1"/>
</dbReference>
<dbReference type="FunFam" id="3.90.640.10:FF:000003">
    <property type="entry name" value="Molecular chaperone DnaK"/>
    <property type="match status" value="1"/>
</dbReference>
<dbReference type="Gene3D" id="1.20.1270.10">
    <property type="match status" value="1"/>
</dbReference>
<dbReference type="Gene3D" id="3.30.420.40">
    <property type="match status" value="2"/>
</dbReference>
<dbReference type="Gene3D" id="3.90.640.10">
    <property type="entry name" value="Actin, Chain A, domain 4"/>
    <property type="match status" value="1"/>
</dbReference>
<dbReference type="Gene3D" id="2.60.34.10">
    <property type="entry name" value="Substrate Binding Domain Of DNAk, Chain A, domain 1"/>
    <property type="match status" value="1"/>
</dbReference>
<dbReference type="HAMAP" id="MF_00332">
    <property type="entry name" value="DnaK"/>
    <property type="match status" value="1"/>
</dbReference>
<dbReference type="InterPro" id="IPR043129">
    <property type="entry name" value="ATPase_NBD"/>
</dbReference>
<dbReference type="InterPro" id="IPR012725">
    <property type="entry name" value="Chaperone_DnaK"/>
</dbReference>
<dbReference type="InterPro" id="IPR018181">
    <property type="entry name" value="Heat_shock_70_CS"/>
</dbReference>
<dbReference type="InterPro" id="IPR029048">
    <property type="entry name" value="HSP70_C_sf"/>
</dbReference>
<dbReference type="InterPro" id="IPR029047">
    <property type="entry name" value="HSP70_peptide-bd_sf"/>
</dbReference>
<dbReference type="InterPro" id="IPR013126">
    <property type="entry name" value="Hsp_70_fam"/>
</dbReference>
<dbReference type="NCBIfam" id="NF001413">
    <property type="entry name" value="PRK00290.1"/>
    <property type="match status" value="1"/>
</dbReference>
<dbReference type="NCBIfam" id="TIGR02350">
    <property type="entry name" value="prok_dnaK"/>
    <property type="match status" value="1"/>
</dbReference>
<dbReference type="PANTHER" id="PTHR19375">
    <property type="entry name" value="HEAT SHOCK PROTEIN 70KDA"/>
    <property type="match status" value="1"/>
</dbReference>
<dbReference type="Pfam" id="PF00012">
    <property type="entry name" value="HSP70"/>
    <property type="match status" value="1"/>
</dbReference>
<dbReference type="PRINTS" id="PR00301">
    <property type="entry name" value="HEATSHOCK70"/>
</dbReference>
<dbReference type="SUPFAM" id="SSF53067">
    <property type="entry name" value="Actin-like ATPase domain"/>
    <property type="match status" value="2"/>
</dbReference>
<dbReference type="SUPFAM" id="SSF100934">
    <property type="entry name" value="Heat shock protein 70kD (HSP70), C-terminal subdomain"/>
    <property type="match status" value="1"/>
</dbReference>
<dbReference type="SUPFAM" id="SSF100920">
    <property type="entry name" value="Heat shock protein 70kD (HSP70), peptide-binding domain"/>
    <property type="match status" value="1"/>
</dbReference>
<dbReference type="PROSITE" id="PS00297">
    <property type="entry name" value="HSP70_1"/>
    <property type="match status" value="1"/>
</dbReference>
<dbReference type="PROSITE" id="PS00329">
    <property type="entry name" value="HSP70_2"/>
    <property type="match status" value="1"/>
</dbReference>
<dbReference type="PROSITE" id="PS01036">
    <property type="entry name" value="HSP70_3"/>
    <property type="match status" value="1"/>
</dbReference>
<reference key="1">
    <citation type="journal article" date="2008" name="Biol. Direct">
        <title>Complete genome sequence of the extremely acidophilic methanotroph isolate V4, Methylacidiphilum infernorum, a representative of the bacterial phylum Verrucomicrobia.</title>
        <authorList>
            <person name="Hou S."/>
            <person name="Makarova K.S."/>
            <person name="Saw J.H."/>
            <person name="Senin P."/>
            <person name="Ly B.V."/>
            <person name="Zhou Z."/>
            <person name="Ren Y."/>
            <person name="Wang J."/>
            <person name="Galperin M.Y."/>
            <person name="Omelchenko M.V."/>
            <person name="Wolf Y.I."/>
            <person name="Yutin N."/>
            <person name="Koonin E.V."/>
            <person name="Stott M.B."/>
            <person name="Mountain B.W."/>
            <person name="Crowe M.A."/>
            <person name="Smirnova A.V."/>
            <person name="Dunfield P.F."/>
            <person name="Feng L."/>
            <person name="Wang L."/>
            <person name="Alam M."/>
        </authorList>
    </citation>
    <scope>NUCLEOTIDE SEQUENCE [LARGE SCALE GENOMIC DNA]</scope>
    <source>
        <strain>Isolate V4</strain>
    </source>
</reference>
<comment type="function">
    <text evidence="1">Acts as a chaperone.</text>
</comment>
<comment type="induction">
    <text evidence="1">By stress conditions e.g. heat shock.</text>
</comment>
<comment type="similarity">
    <text evidence="1">Belongs to the heat shock protein 70 family.</text>
</comment>
<gene>
    <name evidence="1" type="primary">dnaK</name>
    <name type="ordered locus">Minf_2178</name>
</gene>
<keyword id="KW-0067">ATP-binding</keyword>
<keyword id="KW-0143">Chaperone</keyword>
<keyword id="KW-0547">Nucleotide-binding</keyword>
<keyword id="KW-0597">Phosphoprotein</keyword>
<keyword id="KW-0346">Stress response</keyword>
<feature type="chain" id="PRO_1000119728" description="Chaperone protein DnaK">
    <location>
        <begin position="1"/>
        <end position="641"/>
    </location>
</feature>
<feature type="region of interest" description="Disordered" evidence="2">
    <location>
        <begin position="602"/>
        <end position="641"/>
    </location>
</feature>
<feature type="compositionally biased region" description="Low complexity" evidence="2">
    <location>
        <begin position="602"/>
        <end position="611"/>
    </location>
</feature>
<feature type="compositionally biased region" description="Basic and acidic residues" evidence="2">
    <location>
        <begin position="630"/>
        <end position="641"/>
    </location>
</feature>
<feature type="modified residue" description="Phosphothreonine; by autocatalysis" evidence="1">
    <location>
        <position position="200"/>
    </location>
</feature>
<organism>
    <name type="scientific">Methylacidiphilum infernorum (isolate V4)</name>
    <name type="common">Methylokorus infernorum (strain V4)</name>
    <dbReference type="NCBI Taxonomy" id="481448"/>
    <lineage>
        <taxon>Bacteria</taxon>
        <taxon>Pseudomonadati</taxon>
        <taxon>Verrucomicrobiota</taxon>
        <taxon>Methylacidiphilae</taxon>
        <taxon>Methylacidiphilales</taxon>
        <taxon>Methylacidiphilaceae</taxon>
        <taxon>Methylacidiphilum (ex Ratnadevi et al. 2023)</taxon>
    </lineage>
</organism>
<sequence>MAHVLGIDLGTTNSCMAIVEGGQPVVLENSEGARTTPSIVAFTKSGERLVGQAAKRQAITNSKNTIYSIKRFIGRKFSEVQEEIKRVPYKVIEGKNGDCAVEVEVAGERRVYTPQEISAFILMKLKADAESKLGEKITQAVITVPAYFNDSQRQATKAAGEIAGLEVLRIINEPTAASLAYGLDKKKDERIAVYDLGGGTFDISVLEIGEGVFEVKATNGDTHLGGDDWDAAIMEWIISDFKKETGIDLHGQPDAVQRIKEEAEKAKIALSSALEYEINLPFITADQTGPKHIQKKLTRAKLEQLTEHLAERTVQPVLNCLKDAKLTAADIDELVLVGGMTRMPKIIEIARKLIGREPHKGVNPDEVVAVGAAIQGAVLKGQVKDVLLLDVTPLTLSIETAGGIATPMIPRNTTIPTRKSQIFSTFSDNQPSVEIKVLQGERPMARDNKLLGVFHLDGIPPAPRGVPQIEVTFDIDANGILHVSAKDLGTGREQKITITGSSGLSKEEIERMTKEAEAYREQDLKNKERAEAKNNADNAAYQAEKLLREYGDKVDSAKKMEVEKCIEKVREVIKGDDTEAIKRAMDELNEKVQAISVEMYRAASSKASAASSPPPPPGAGGQKSDVIDAEFEKVDKDKPQA</sequence>
<protein>
    <recommendedName>
        <fullName evidence="1">Chaperone protein DnaK</fullName>
    </recommendedName>
    <alternativeName>
        <fullName evidence="1">HSP70</fullName>
    </alternativeName>
    <alternativeName>
        <fullName evidence="1">Heat shock 70 kDa protein</fullName>
    </alternativeName>
    <alternativeName>
        <fullName evidence="1">Heat shock protein 70</fullName>
    </alternativeName>
</protein>